<protein>
    <recommendedName>
        <fullName evidence="1">Trigger factor</fullName>
        <shortName evidence="1">TF</shortName>
        <ecNumber evidence="1">5.2.1.8</ecNumber>
    </recommendedName>
    <alternativeName>
        <fullName evidence="1">PPIase</fullName>
    </alternativeName>
</protein>
<name>TIG_DESAH</name>
<dbReference type="EC" id="5.2.1.8" evidence="1"/>
<dbReference type="EMBL" id="CP001087">
    <property type="protein sequence ID" value="ACN13554.1"/>
    <property type="molecule type" value="Genomic_DNA"/>
</dbReference>
<dbReference type="RefSeq" id="WP_012662803.1">
    <property type="nucleotide sequence ID" value="NC_012108.1"/>
</dbReference>
<dbReference type="SMR" id="C0QGS9"/>
<dbReference type="STRING" id="177437.HRM2_04370"/>
<dbReference type="KEGG" id="dat:HRM2_04370"/>
<dbReference type="eggNOG" id="COG0544">
    <property type="taxonomic scope" value="Bacteria"/>
</dbReference>
<dbReference type="HOGENOM" id="CLU_033058_2_0_7"/>
<dbReference type="OrthoDB" id="9767721at2"/>
<dbReference type="Proteomes" id="UP000000442">
    <property type="component" value="Chromosome"/>
</dbReference>
<dbReference type="GO" id="GO:0005737">
    <property type="term" value="C:cytoplasm"/>
    <property type="evidence" value="ECO:0007669"/>
    <property type="project" value="UniProtKB-SubCell"/>
</dbReference>
<dbReference type="GO" id="GO:0003755">
    <property type="term" value="F:peptidyl-prolyl cis-trans isomerase activity"/>
    <property type="evidence" value="ECO:0007669"/>
    <property type="project" value="UniProtKB-UniRule"/>
</dbReference>
<dbReference type="GO" id="GO:0044183">
    <property type="term" value="F:protein folding chaperone"/>
    <property type="evidence" value="ECO:0007669"/>
    <property type="project" value="TreeGrafter"/>
</dbReference>
<dbReference type="GO" id="GO:0043022">
    <property type="term" value="F:ribosome binding"/>
    <property type="evidence" value="ECO:0007669"/>
    <property type="project" value="TreeGrafter"/>
</dbReference>
<dbReference type="GO" id="GO:0051083">
    <property type="term" value="P:'de novo' cotranslational protein folding"/>
    <property type="evidence" value="ECO:0007669"/>
    <property type="project" value="TreeGrafter"/>
</dbReference>
<dbReference type="GO" id="GO:0051301">
    <property type="term" value="P:cell division"/>
    <property type="evidence" value="ECO:0007669"/>
    <property type="project" value="UniProtKB-KW"/>
</dbReference>
<dbReference type="GO" id="GO:0061077">
    <property type="term" value="P:chaperone-mediated protein folding"/>
    <property type="evidence" value="ECO:0007669"/>
    <property type="project" value="TreeGrafter"/>
</dbReference>
<dbReference type="GO" id="GO:0015031">
    <property type="term" value="P:protein transport"/>
    <property type="evidence" value="ECO:0007669"/>
    <property type="project" value="UniProtKB-UniRule"/>
</dbReference>
<dbReference type="GO" id="GO:0043335">
    <property type="term" value="P:protein unfolding"/>
    <property type="evidence" value="ECO:0007669"/>
    <property type="project" value="TreeGrafter"/>
</dbReference>
<dbReference type="Gene3D" id="3.10.50.40">
    <property type="match status" value="1"/>
</dbReference>
<dbReference type="Gene3D" id="3.30.70.1050">
    <property type="entry name" value="Trigger factor ribosome-binding domain"/>
    <property type="match status" value="1"/>
</dbReference>
<dbReference type="Gene3D" id="1.10.3120.10">
    <property type="entry name" value="Trigger factor, C-terminal domain"/>
    <property type="match status" value="1"/>
</dbReference>
<dbReference type="HAMAP" id="MF_00303">
    <property type="entry name" value="Trigger_factor_Tig"/>
    <property type="match status" value="1"/>
</dbReference>
<dbReference type="InterPro" id="IPR046357">
    <property type="entry name" value="PPIase_dom_sf"/>
</dbReference>
<dbReference type="InterPro" id="IPR005215">
    <property type="entry name" value="Trig_fac"/>
</dbReference>
<dbReference type="InterPro" id="IPR008880">
    <property type="entry name" value="Trigger_fac_C"/>
</dbReference>
<dbReference type="InterPro" id="IPR037041">
    <property type="entry name" value="Trigger_fac_C_sf"/>
</dbReference>
<dbReference type="InterPro" id="IPR008881">
    <property type="entry name" value="Trigger_fac_ribosome-bd_bac"/>
</dbReference>
<dbReference type="InterPro" id="IPR036611">
    <property type="entry name" value="Trigger_fac_ribosome-bd_sf"/>
</dbReference>
<dbReference type="InterPro" id="IPR027304">
    <property type="entry name" value="Trigger_fact/SurA_dom_sf"/>
</dbReference>
<dbReference type="NCBIfam" id="TIGR00115">
    <property type="entry name" value="tig"/>
    <property type="match status" value="1"/>
</dbReference>
<dbReference type="PANTHER" id="PTHR30560">
    <property type="entry name" value="TRIGGER FACTOR CHAPERONE AND PEPTIDYL-PROLYL CIS/TRANS ISOMERASE"/>
    <property type="match status" value="1"/>
</dbReference>
<dbReference type="PANTHER" id="PTHR30560:SF3">
    <property type="entry name" value="TRIGGER FACTOR-LIKE PROTEIN TIG, CHLOROPLASTIC"/>
    <property type="match status" value="1"/>
</dbReference>
<dbReference type="Pfam" id="PF05698">
    <property type="entry name" value="Trigger_C"/>
    <property type="match status" value="1"/>
</dbReference>
<dbReference type="Pfam" id="PF05697">
    <property type="entry name" value="Trigger_N"/>
    <property type="match status" value="1"/>
</dbReference>
<dbReference type="PIRSF" id="PIRSF003095">
    <property type="entry name" value="Trigger_factor"/>
    <property type="match status" value="1"/>
</dbReference>
<dbReference type="SUPFAM" id="SSF54534">
    <property type="entry name" value="FKBP-like"/>
    <property type="match status" value="1"/>
</dbReference>
<dbReference type="SUPFAM" id="SSF109998">
    <property type="entry name" value="Triger factor/SurA peptide-binding domain-like"/>
    <property type="match status" value="1"/>
</dbReference>
<dbReference type="SUPFAM" id="SSF102735">
    <property type="entry name" value="Trigger factor ribosome-binding domain"/>
    <property type="match status" value="1"/>
</dbReference>
<comment type="function">
    <text evidence="1">Involved in protein export. Acts as a chaperone by maintaining the newly synthesized protein in an open conformation. Functions as a peptidyl-prolyl cis-trans isomerase.</text>
</comment>
<comment type="catalytic activity">
    <reaction evidence="1">
        <text>[protein]-peptidylproline (omega=180) = [protein]-peptidylproline (omega=0)</text>
        <dbReference type="Rhea" id="RHEA:16237"/>
        <dbReference type="Rhea" id="RHEA-COMP:10747"/>
        <dbReference type="Rhea" id="RHEA-COMP:10748"/>
        <dbReference type="ChEBI" id="CHEBI:83833"/>
        <dbReference type="ChEBI" id="CHEBI:83834"/>
        <dbReference type="EC" id="5.2.1.8"/>
    </reaction>
</comment>
<comment type="subcellular location">
    <subcellularLocation>
        <location>Cytoplasm</location>
    </subcellularLocation>
    <text evidence="1">About half TF is bound to the ribosome near the polypeptide exit tunnel while the other half is free in the cytoplasm.</text>
</comment>
<comment type="domain">
    <text evidence="1">Consists of 3 domains; the N-terminus binds the ribosome, the middle domain has PPIase activity, while the C-terminus has intrinsic chaperone activity on its own.</text>
</comment>
<comment type="similarity">
    <text evidence="1">Belongs to the FKBP-type PPIase family. Tig subfamily.</text>
</comment>
<sequence length="450" mass="50636">MQLNIEEKSSVKKVLHIEIPKEDVAKELDTAYNELKKTATVKGFRKGKIPRKILETRFSKDVHADLVPHLVQNAFSEALDEHKFNLVGGPQVDPPELTPGEALSFDISIEVMPELEAVDFKGIELKKTMYEATDQEVDAQIQMIRKTMATKEKVTEERPVKVEDFVLIDYQGFVDGAPCDAAPKVENYVMAIGSNTLPAEFSEKLLGAIPVKEMDIDVVYADDDKDEALAGKTVIYKVTLKEIQEQILPPVDDTLVENLGQYKNLDELKAAILDNLKKGYEQRTQHELSEQIFTDLLEKIEFEVPDTMVDAELQGIIAEAEQAYAQNNIKLEDVGLSQDFLKTQYRGVAEKQARRHILLGKIIDQENLELTEDELEAGYAEMALGMNASVDAVKNFFKMDGRQLEYYKHTQLEKKAVRLIIEQGSVTEVAPEVETEVSESAADVEDKTDQ</sequence>
<feature type="chain" id="PRO_1000204984" description="Trigger factor">
    <location>
        <begin position="1"/>
        <end position="450"/>
    </location>
</feature>
<feature type="domain" description="PPIase FKBP-type" evidence="1">
    <location>
        <begin position="163"/>
        <end position="249"/>
    </location>
</feature>
<feature type="region of interest" description="Disordered" evidence="2">
    <location>
        <begin position="431"/>
        <end position="450"/>
    </location>
</feature>
<feature type="compositionally biased region" description="Acidic residues" evidence="2">
    <location>
        <begin position="431"/>
        <end position="443"/>
    </location>
</feature>
<accession>C0QGS9</accession>
<evidence type="ECO:0000255" key="1">
    <source>
        <dbReference type="HAMAP-Rule" id="MF_00303"/>
    </source>
</evidence>
<evidence type="ECO:0000256" key="2">
    <source>
        <dbReference type="SAM" id="MobiDB-lite"/>
    </source>
</evidence>
<keyword id="KW-0131">Cell cycle</keyword>
<keyword id="KW-0132">Cell division</keyword>
<keyword id="KW-0143">Chaperone</keyword>
<keyword id="KW-0963">Cytoplasm</keyword>
<keyword id="KW-0413">Isomerase</keyword>
<keyword id="KW-1185">Reference proteome</keyword>
<keyword id="KW-0697">Rotamase</keyword>
<organism>
    <name type="scientific">Desulforapulum autotrophicum (strain ATCC 43914 / DSM 3382 / VKM B-1955 / HRM2)</name>
    <name type="common">Desulfobacterium autotrophicum</name>
    <dbReference type="NCBI Taxonomy" id="177437"/>
    <lineage>
        <taxon>Bacteria</taxon>
        <taxon>Pseudomonadati</taxon>
        <taxon>Thermodesulfobacteriota</taxon>
        <taxon>Desulfobacteria</taxon>
        <taxon>Desulfobacterales</taxon>
        <taxon>Desulfobacteraceae</taxon>
        <taxon>Desulforapulum</taxon>
    </lineage>
</organism>
<reference key="1">
    <citation type="journal article" date="2009" name="Environ. Microbiol.">
        <title>Genome sequence of Desulfobacterium autotrophicum HRM2, a marine sulfate reducer oxidizing organic carbon completely to carbon dioxide.</title>
        <authorList>
            <person name="Strittmatter A.W."/>
            <person name="Liesegang H."/>
            <person name="Rabus R."/>
            <person name="Decker I."/>
            <person name="Amann J."/>
            <person name="Andres S."/>
            <person name="Henne A."/>
            <person name="Fricke W.F."/>
            <person name="Martinez-Arias R."/>
            <person name="Bartels D."/>
            <person name="Goesmann A."/>
            <person name="Krause L."/>
            <person name="Puehler A."/>
            <person name="Klenk H.P."/>
            <person name="Richter M."/>
            <person name="Schuler M."/>
            <person name="Gloeckner F.O."/>
            <person name="Meyerdierks A."/>
            <person name="Gottschalk G."/>
            <person name="Amann R."/>
        </authorList>
    </citation>
    <scope>NUCLEOTIDE SEQUENCE [LARGE SCALE GENOMIC DNA]</scope>
    <source>
        <strain>ATCC 43914 / DSM 3382 / VKM B-1955 / HRM2</strain>
    </source>
</reference>
<gene>
    <name evidence="1" type="primary">tig</name>
    <name type="ordered locus">HRM2_04370</name>
</gene>
<proteinExistence type="inferred from homology"/>